<gene>
    <name evidence="1" type="primary">surE</name>
    <name type="ordered locus">EcHS_A2882</name>
</gene>
<feature type="chain" id="PRO_1000057411" description="5'/3'-nucleotidase SurE">
    <location>
        <begin position="1"/>
        <end position="253"/>
    </location>
</feature>
<feature type="binding site" evidence="1">
    <location>
        <position position="8"/>
    </location>
    <ligand>
        <name>a divalent metal cation</name>
        <dbReference type="ChEBI" id="CHEBI:60240"/>
    </ligand>
</feature>
<feature type="binding site" evidence="1">
    <location>
        <position position="9"/>
    </location>
    <ligand>
        <name>a divalent metal cation</name>
        <dbReference type="ChEBI" id="CHEBI:60240"/>
    </ligand>
</feature>
<feature type="binding site" evidence="1">
    <location>
        <position position="39"/>
    </location>
    <ligand>
        <name>a divalent metal cation</name>
        <dbReference type="ChEBI" id="CHEBI:60240"/>
    </ligand>
</feature>
<feature type="binding site" evidence="1">
    <location>
        <position position="92"/>
    </location>
    <ligand>
        <name>a divalent metal cation</name>
        <dbReference type="ChEBI" id="CHEBI:60240"/>
    </ligand>
</feature>
<reference key="1">
    <citation type="journal article" date="2008" name="J. Bacteriol.">
        <title>The pangenome structure of Escherichia coli: comparative genomic analysis of E. coli commensal and pathogenic isolates.</title>
        <authorList>
            <person name="Rasko D.A."/>
            <person name="Rosovitz M.J."/>
            <person name="Myers G.S.A."/>
            <person name="Mongodin E.F."/>
            <person name="Fricke W.F."/>
            <person name="Gajer P."/>
            <person name="Crabtree J."/>
            <person name="Sebaihia M."/>
            <person name="Thomson N.R."/>
            <person name="Chaudhuri R."/>
            <person name="Henderson I.R."/>
            <person name="Sperandio V."/>
            <person name="Ravel J."/>
        </authorList>
    </citation>
    <scope>NUCLEOTIDE SEQUENCE [LARGE SCALE GENOMIC DNA]</scope>
    <source>
        <strain>HS</strain>
    </source>
</reference>
<dbReference type="EC" id="3.1.3.5" evidence="1"/>
<dbReference type="EC" id="3.1.3.6" evidence="1"/>
<dbReference type="EC" id="3.6.1.11" evidence="1"/>
<dbReference type="EMBL" id="CP000802">
    <property type="protein sequence ID" value="ABV07127.1"/>
    <property type="molecule type" value="Genomic_DNA"/>
</dbReference>
<dbReference type="RefSeq" id="WP_001295182.1">
    <property type="nucleotide sequence ID" value="NC_009800.1"/>
</dbReference>
<dbReference type="SMR" id="A8A3M3"/>
<dbReference type="GeneID" id="93779262"/>
<dbReference type="KEGG" id="ecx:EcHS_A2882"/>
<dbReference type="HOGENOM" id="CLU_045192_1_2_6"/>
<dbReference type="GO" id="GO:0005737">
    <property type="term" value="C:cytoplasm"/>
    <property type="evidence" value="ECO:0007669"/>
    <property type="project" value="UniProtKB-SubCell"/>
</dbReference>
<dbReference type="GO" id="GO:0008254">
    <property type="term" value="F:3'-nucleotidase activity"/>
    <property type="evidence" value="ECO:0007669"/>
    <property type="project" value="UniProtKB-UniRule"/>
</dbReference>
<dbReference type="GO" id="GO:0008253">
    <property type="term" value="F:5'-nucleotidase activity"/>
    <property type="evidence" value="ECO:0007669"/>
    <property type="project" value="UniProtKB-UniRule"/>
</dbReference>
<dbReference type="GO" id="GO:0004309">
    <property type="term" value="F:exopolyphosphatase activity"/>
    <property type="evidence" value="ECO:0007669"/>
    <property type="project" value="UniProtKB-UniRule"/>
</dbReference>
<dbReference type="GO" id="GO:0046872">
    <property type="term" value="F:metal ion binding"/>
    <property type="evidence" value="ECO:0007669"/>
    <property type="project" value="UniProtKB-UniRule"/>
</dbReference>
<dbReference type="GO" id="GO:0000166">
    <property type="term" value="F:nucleotide binding"/>
    <property type="evidence" value="ECO:0007669"/>
    <property type="project" value="UniProtKB-KW"/>
</dbReference>
<dbReference type="FunFam" id="3.40.1210.10:FF:000001">
    <property type="entry name" value="5'/3'-nucleotidase SurE"/>
    <property type="match status" value="1"/>
</dbReference>
<dbReference type="Gene3D" id="3.40.1210.10">
    <property type="entry name" value="Survival protein SurE-like phosphatase/nucleotidase"/>
    <property type="match status" value="1"/>
</dbReference>
<dbReference type="HAMAP" id="MF_00060">
    <property type="entry name" value="SurE"/>
    <property type="match status" value="1"/>
</dbReference>
<dbReference type="InterPro" id="IPR030048">
    <property type="entry name" value="SurE"/>
</dbReference>
<dbReference type="InterPro" id="IPR002828">
    <property type="entry name" value="SurE-like_Pase/nucleotidase"/>
</dbReference>
<dbReference type="InterPro" id="IPR036523">
    <property type="entry name" value="SurE-like_sf"/>
</dbReference>
<dbReference type="NCBIfam" id="NF001488">
    <property type="entry name" value="PRK00346.1-1"/>
    <property type="match status" value="1"/>
</dbReference>
<dbReference type="NCBIfam" id="NF001489">
    <property type="entry name" value="PRK00346.1-3"/>
    <property type="match status" value="1"/>
</dbReference>
<dbReference type="NCBIfam" id="NF001490">
    <property type="entry name" value="PRK00346.1-4"/>
    <property type="match status" value="1"/>
</dbReference>
<dbReference type="NCBIfam" id="TIGR00087">
    <property type="entry name" value="surE"/>
    <property type="match status" value="1"/>
</dbReference>
<dbReference type="PANTHER" id="PTHR30457">
    <property type="entry name" value="5'-NUCLEOTIDASE SURE"/>
    <property type="match status" value="1"/>
</dbReference>
<dbReference type="PANTHER" id="PTHR30457:SF12">
    <property type="entry name" value="5'_3'-NUCLEOTIDASE SURE"/>
    <property type="match status" value="1"/>
</dbReference>
<dbReference type="Pfam" id="PF01975">
    <property type="entry name" value="SurE"/>
    <property type="match status" value="1"/>
</dbReference>
<dbReference type="SUPFAM" id="SSF64167">
    <property type="entry name" value="SurE-like"/>
    <property type="match status" value="1"/>
</dbReference>
<name>SURE_ECOHS</name>
<sequence>MRILLSNDDGVHAPGIQTLAKALREFADVQVVAPDRNRSGASNSLTLESSLRTFTFENGDIAVQMGTPTDCVYLGVNALMRPRPDIVVSGINAGPNLGDDVIYSGTVAAAMEGRHLGFPALAVSLDGHKHYDTAAAVTCSILRALCKEPLRTGRILNINVPDLPLDQIKGIRVTRCGTRHPADQVIPQQDPRGNTLYWIGPPGGKCDAGPGTDFAAVDEGYVSITPLHVDLTAHSAQDVVSDWLNSVGVGTQW</sequence>
<evidence type="ECO:0000255" key="1">
    <source>
        <dbReference type="HAMAP-Rule" id="MF_00060"/>
    </source>
</evidence>
<keyword id="KW-0963">Cytoplasm</keyword>
<keyword id="KW-0378">Hydrolase</keyword>
<keyword id="KW-0479">Metal-binding</keyword>
<keyword id="KW-0547">Nucleotide-binding</keyword>
<accession>A8A3M3</accession>
<organism>
    <name type="scientific">Escherichia coli O9:H4 (strain HS)</name>
    <dbReference type="NCBI Taxonomy" id="331112"/>
    <lineage>
        <taxon>Bacteria</taxon>
        <taxon>Pseudomonadati</taxon>
        <taxon>Pseudomonadota</taxon>
        <taxon>Gammaproteobacteria</taxon>
        <taxon>Enterobacterales</taxon>
        <taxon>Enterobacteriaceae</taxon>
        <taxon>Escherichia</taxon>
    </lineage>
</organism>
<proteinExistence type="inferred from homology"/>
<comment type="function">
    <text evidence="1">Nucleotidase with a broad substrate specificity as it can dephosphorylate various ribo- and deoxyribonucleoside 5'-monophosphates and ribonucleoside 3'-monophosphates with highest affinity to 3'-AMP. Also hydrolyzes polyphosphate (exopolyphosphatase activity) with the preference for short-chain-length substrates (P20-25). Might be involved in the regulation of dNTP and NTP pools, and in the turnover of 3'-mononucleotides produced by numerous intracellular RNases (T1, T2, and F) during the degradation of various RNAs.</text>
</comment>
<comment type="catalytic activity">
    <reaction evidence="1">
        <text>a ribonucleoside 5'-phosphate + H2O = a ribonucleoside + phosphate</text>
        <dbReference type="Rhea" id="RHEA:12484"/>
        <dbReference type="ChEBI" id="CHEBI:15377"/>
        <dbReference type="ChEBI" id="CHEBI:18254"/>
        <dbReference type="ChEBI" id="CHEBI:43474"/>
        <dbReference type="ChEBI" id="CHEBI:58043"/>
        <dbReference type="EC" id="3.1.3.5"/>
    </reaction>
</comment>
<comment type="catalytic activity">
    <reaction evidence="1">
        <text>a ribonucleoside 3'-phosphate + H2O = a ribonucleoside + phosphate</text>
        <dbReference type="Rhea" id="RHEA:10144"/>
        <dbReference type="ChEBI" id="CHEBI:13197"/>
        <dbReference type="ChEBI" id="CHEBI:15377"/>
        <dbReference type="ChEBI" id="CHEBI:18254"/>
        <dbReference type="ChEBI" id="CHEBI:43474"/>
        <dbReference type="EC" id="3.1.3.6"/>
    </reaction>
</comment>
<comment type="catalytic activity">
    <reaction evidence="1">
        <text>[phosphate](n) + H2O = [phosphate](n-1) + phosphate + H(+)</text>
        <dbReference type="Rhea" id="RHEA:21528"/>
        <dbReference type="Rhea" id="RHEA-COMP:9859"/>
        <dbReference type="Rhea" id="RHEA-COMP:14279"/>
        <dbReference type="ChEBI" id="CHEBI:15377"/>
        <dbReference type="ChEBI" id="CHEBI:15378"/>
        <dbReference type="ChEBI" id="CHEBI:16838"/>
        <dbReference type="ChEBI" id="CHEBI:43474"/>
        <dbReference type="EC" id="3.6.1.11"/>
    </reaction>
</comment>
<comment type="cofactor">
    <cofactor evidence="1">
        <name>a divalent metal cation</name>
        <dbReference type="ChEBI" id="CHEBI:60240"/>
    </cofactor>
    <text evidence="1">Binds 1 divalent metal cation per subunit.</text>
</comment>
<comment type="subcellular location">
    <subcellularLocation>
        <location evidence="1">Cytoplasm</location>
    </subcellularLocation>
</comment>
<comment type="similarity">
    <text evidence="1">Belongs to the SurE nucleotidase family.</text>
</comment>
<protein>
    <recommendedName>
        <fullName evidence="1">5'/3'-nucleotidase SurE</fullName>
        <ecNumber evidence="1">3.1.3.5</ecNumber>
        <ecNumber evidence="1">3.1.3.6</ecNumber>
    </recommendedName>
    <alternativeName>
        <fullName evidence="1">Exopolyphosphatase</fullName>
        <ecNumber evidence="1">3.6.1.11</ecNumber>
    </alternativeName>
    <alternativeName>
        <fullName evidence="1">Nucleoside monophosphate phosphohydrolase</fullName>
    </alternativeName>
</protein>